<reference key="1">
    <citation type="journal article" date="2004" name="Mol. Plant Microbe Interact.">
        <title>The genome sequence of the Gram-positive sugarcane pathogen Leifsonia xyli subsp. xyli.</title>
        <authorList>
            <person name="Monteiro-Vitorello C.B."/>
            <person name="Camargo L.E.A."/>
            <person name="Van Sluys M.A."/>
            <person name="Kitajima J.P."/>
            <person name="Truffi D."/>
            <person name="do Amaral A.M."/>
            <person name="Harakava R."/>
            <person name="de Oliveira J.C.F."/>
            <person name="Wood D."/>
            <person name="de Oliveira M.C."/>
            <person name="Miyaki C.Y."/>
            <person name="Takita M.A."/>
            <person name="da Silva A.C.R."/>
            <person name="Furlan L.R."/>
            <person name="Carraro D.M."/>
            <person name="Camarotte G."/>
            <person name="Almeida N.F. Jr."/>
            <person name="Carrer H."/>
            <person name="Coutinho L.L."/>
            <person name="El-Dorry H.A."/>
            <person name="Ferro M.I.T."/>
            <person name="Gagliardi P.R."/>
            <person name="Giglioti E."/>
            <person name="Goldman M.H.S."/>
            <person name="Goldman G.H."/>
            <person name="Kimura E.T."/>
            <person name="Ferro E.S."/>
            <person name="Kuramae E.E."/>
            <person name="Lemos E.G.M."/>
            <person name="Lemos M.V.F."/>
            <person name="Mauro S.M.Z."/>
            <person name="Machado M.A."/>
            <person name="Marino C.L."/>
            <person name="Menck C.F."/>
            <person name="Nunes L.R."/>
            <person name="Oliveira R.C."/>
            <person name="Pereira G.G."/>
            <person name="Siqueira W."/>
            <person name="de Souza A.A."/>
            <person name="Tsai S.M."/>
            <person name="Zanca A.S."/>
            <person name="Simpson A.J.G."/>
            <person name="Brumbley S.M."/>
            <person name="Setubal J.C."/>
        </authorList>
    </citation>
    <scope>NUCLEOTIDE SEQUENCE [LARGE SCALE GENOMIC DNA]</scope>
    <source>
        <strain>CTCB07</strain>
    </source>
</reference>
<comment type="function">
    <text evidence="1">Catalyzes the addition of an amino acid to the nucleotide precursor UDP-N-acetylmuramoyl-L-alanyl-D-glutamate (UMAG) in the biosynthesis of bacterial cell-wall peptidoglycan.</text>
</comment>
<comment type="pathway">
    <text evidence="1">Cell wall biogenesis; peptidoglycan biosynthesis.</text>
</comment>
<comment type="subcellular location">
    <subcellularLocation>
        <location evidence="1">Cytoplasm</location>
    </subcellularLocation>
</comment>
<comment type="PTM">
    <text evidence="1">Carboxylation is probably crucial for Mg(2+) binding and, consequently, for the gamma-phosphate positioning of ATP.</text>
</comment>
<comment type="similarity">
    <text evidence="1">Belongs to the MurCDEF family. MurE subfamily.</text>
</comment>
<evidence type="ECO:0000255" key="1">
    <source>
        <dbReference type="HAMAP-Rule" id="MF_00208"/>
    </source>
</evidence>
<gene>
    <name evidence="1" type="primary">murE</name>
    <name type="ordered locus">Lxx15310</name>
</gene>
<organism>
    <name type="scientific">Leifsonia xyli subsp. xyli (strain CTCB07)</name>
    <dbReference type="NCBI Taxonomy" id="281090"/>
    <lineage>
        <taxon>Bacteria</taxon>
        <taxon>Bacillati</taxon>
        <taxon>Actinomycetota</taxon>
        <taxon>Actinomycetes</taxon>
        <taxon>Micrococcales</taxon>
        <taxon>Microbacteriaceae</taxon>
        <taxon>Leifsonia</taxon>
    </lineage>
</organism>
<feature type="chain" id="PRO_0000101906" description="UDP-N-acetylmuramyl-tripeptide synthetase">
    <location>
        <begin position="1"/>
        <end position="514"/>
    </location>
</feature>
<feature type="binding site" evidence="1">
    <location>
        <position position="44"/>
    </location>
    <ligand>
        <name>UDP-N-acetyl-alpha-D-muramoyl-L-alanyl-D-glutamate</name>
        <dbReference type="ChEBI" id="CHEBI:83900"/>
    </ligand>
</feature>
<feature type="binding site" evidence="1">
    <location>
        <position position="46"/>
    </location>
    <ligand>
        <name>UDP-N-acetyl-alpha-D-muramoyl-L-alanyl-D-glutamate</name>
        <dbReference type="ChEBI" id="CHEBI:83900"/>
    </ligand>
</feature>
<feature type="binding site" evidence="1">
    <location>
        <begin position="129"/>
        <end position="135"/>
    </location>
    <ligand>
        <name>ATP</name>
        <dbReference type="ChEBI" id="CHEBI:30616"/>
    </ligand>
</feature>
<feature type="binding site" evidence="1">
    <location>
        <begin position="171"/>
        <end position="172"/>
    </location>
    <ligand>
        <name>UDP-N-acetyl-alpha-D-muramoyl-L-alanyl-D-glutamate</name>
        <dbReference type="ChEBI" id="CHEBI:83900"/>
    </ligand>
</feature>
<feature type="binding site" evidence="1">
    <location>
        <position position="198"/>
    </location>
    <ligand>
        <name>UDP-N-acetyl-alpha-D-muramoyl-L-alanyl-D-glutamate</name>
        <dbReference type="ChEBI" id="CHEBI:83900"/>
    </ligand>
</feature>
<feature type="binding site" evidence="1">
    <location>
        <position position="206"/>
    </location>
    <ligand>
        <name>UDP-N-acetyl-alpha-D-muramoyl-L-alanyl-D-glutamate</name>
        <dbReference type="ChEBI" id="CHEBI:83900"/>
    </ligand>
</feature>
<feature type="modified residue" description="N6-carboxylysine" evidence="1">
    <location>
        <position position="238"/>
    </location>
</feature>
<accession>Q6AE59</accession>
<protein>
    <recommendedName>
        <fullName evidence="1">UDP-N-acetylmuramyl-tripeptide synthetase</fullName>
        <ecNumber evidence="1">6.3.2.-</ecNumber>
    </recommendedName>
    <alternativeName>
        <fullName evidence="1">UDP-MurNAc-tripeptide synthetase</fullName>
    </alternativeName>
</protein>
<dbReference type="EC" id="6.3.2.-" evidence="1"/>
<dbReference type="EMBL" id="AE016822">
    <property type="protein sequence ID" value="AAT89337.1"/>
    <property type="molecule type" value="Genomic_DNA"/>
</dbReference>
<dbReference type="RefSeq" id="WP_011186327.1">
    <property type="nucleotide sequence ID" value="NC_006087.1"/>
</dbReference>
<dbReference type="SMR" id="Q6AE59"/>
<dbReference type="STRING" id="281090.Lxx15310"/>
<dbReference type="KEGG" id="lxx:Lxx15310"/>
<dbReference type="eggNOG" id="COG0769">
    <property type="taxonomic scope" value="Bacteria"/>
</dbReference>
<dbReference type="HOGENOM" id="CLU_022291_4_1_11"/>
<dbReference type="UniPathway" id="UPA00219"/>
<dbReference type="Proteomes" id="UP000001306">
    <property type="component" value="Chromosome"/>
</dbReference>
<dbReference type="GO" id="GO:0005737">
    <property type="term" value="C:cytoplasm"/>
    <property type="evidence" value="ECO:0007669"/>
    <property type="project" value="UniProtKB-SubCell"/>
</dbReference>
<dbReference type="GO" id="GO:0016881">
    <property type="term" value="F:acid-amino acid ligase activity"/>
    <property type="evidence" value="ECO:0007669"/>
    <property type="project" value="UniProtKB-UniRule"/>
</dbReference>
<dbReference type="GO" id="GO:0005524">
    <property type="term" value="F:ATP binding"/>
    <property type="evidence" value="ECO:0007669"/>
    <property type="project" value="UniProtKB-UniRule"/>
</dbReference>
<dbReference type="GO" id="GO:0000287">
    <property type="term" value="F:magnesium ion binding"/>
    <property type="evidence" value="ECO:0007669"/>
    <property type="project" value="UniProtKB-UniRule"/>
</dbReference>
<dbReference type="GO" id="GO:0051301">
    <property type="term" value="P:cell division"/>
    <property type="evidence" value="ECO:0007669"/>
    <property type="project" value="UniProtKB-KW"/>
</dbReference>
<dbReference type="GO" id="GO:0071555">
    <property type="term" value="P:cell wall organization"/>
    <property type="evidence" value="ECO:0007669"/>
    <property type="project" value="UniProtKB-KW"/>
</dbReference>
<dbReference type="GO" id="GO:0009252">
    <property type="term" value="P:peptidoglycan biosynthetic process"/>
    <property type="evidence" value="ECO:0007669"/>
    <property type="project" value="UniProtKB-UniRule"/>
</dbReference>
<dbReference type="GO" id="GO:0008360">
    <property type="term" value="P:regulation of cell shape"/>
    <property type="evidence" value="ECO:0007669"/>
    <property type="project" value="UniProtKB-KW"/>
</dbReference>
<dbReference type="Gene3D" id="3.90.190.20">
    <property type="entry name" value="Mur ligase, C-terminal domain"/>
    <property type="match status" value="1"/>
</dbReference>
<dbReference type="Gene3D" id="3.40.1190.10">
    <property type="entry name" value="Mur-like, catalytic domain"/>
    <property type="match status" value="1"/>
</dbReference>
<dbReference type="Gene3D" id="3.40.1390.10">
    <property type="entry name" value="MurE/MurF, N-terminal domain"/>
    <property type="match status" value="1"/>
</dbReference>
<dbReference type="HAMAP" id="MF_00208">
    <property type="entry name" value="MurE"/>
    <property type="match status" value="1"/>
</dbReference>
<dbReference type="InterPro" id="IPR036565">
    <property type="entry name" value="Mur-like_cat_sf"/>
</dbReference>
<dbReference type="InterPro" id="IPR004101">
    <property type="entry name" value="Mur_ligase_C"/>
</dbReference>
<dbReference type="InterPro" id="IPR036615">
    <property type="entry name" value="Mur_ligase_C_dom_sf"/>
</dbReference>
<dbReference type="InterPro" id="IPR013221">
    <property type="entry name" value="Mur_ligase_cen"/>
</dbReference>
<dbReference type="InterPro" id="IPR000713">
    <property type="entry name" value="Mur_ligase_N"/>
</dbReference>
<dbReference type="InterPro" id="IPR035911">
    <property type="entry name" value="MurE/MurF_N"/>
</dbReference>
<dbReference type="InterPro" id="IPR005761">
    <property type="entry name" value="UDP-N-AcMur-Glu-dNH2Pim_ligase"/>
</dbReference>
<dbReference type="NCBIfam" id="TIGR01085">
    <property type="entry name" value="murE"/>
    <property type="match status" value="1"/>
</dbReference>
<dbReference type="PANTHER" id="PTHR23135">
    <property type="entry name" value="MUR LIGASE FAMILY MEMBER"/>
    <property type="match status" value="1"/>
</dbReference>
<dbReference type="PANTHER" id="PTHR23135:SF4">
    <property type="entry name" value="UDP-N-ACETYLMURAMOYL-L-ALANYL-D-GLUTAMATE--2,6-DIAMINOPIMELATE LIGASE MURE HOMOLOG, CHLOROPLASTIC"/>
    <property type="match status" value="1"/>
</dbReference>
<dbReference type="Pfam" id="PF01225">
    <property type="entry name" value="Mur_ligase"/>
    <property type="match status" value="1"/>
</dbReference>
<dbReference type="Pfam" id="PF02875">
    <property type="entry name" value="Mur_ligase_C"/>
    <property type="match status" value="1"/>
</dbReference>
<dbReference type="Pfam" id="PF08245">
    <property type="entry name" value="Mur_ligase_M"/>
    <property type="match status" value="1"/>
</dbReference>
<dbReference type="SUPFAM" id="SSF53623">
    <property type="entry name" value="MurD-like peptide ligases, catalytic domain"/>
    <property type="match status" value="1"/>
</dbReference>
<dbReference type="SUPFAM" id="SSF53244">
    <property type="entry name" value="MurD-like peptide ligases, peptide-binding domain"/>
    <property type="match status" value="1"/>
</dbReference>
<dbReference type="SUPFAM" id="SSF63418">
    <property type="entry name" value="MurE/MurF N-terminal domain"/>
    <property type="match status" value="1"/>
</dbReference>
<name>MURE_LEIXX</name>
<sequence>MTGPAPSALRPEHPVARPLAQLVALFGLDVRGDLDGVEVTGAALASSAVEPGDLYVGVPGRNAHGAAYAAAAAEAGAVAVLTDGDGADLAAAAGLPIVVTADPRAALGAVAAWIHRTEDNAATLFGVTGTNGKTSVVYLLYAILGQLGIVAGLTSTAERRIGEHAITSTLTTPEATELHALLARMREEGVRAAAIEVSAQALSRHRVDGIEFDVAGFTNLSHDHLDDYTAMPDYFAAKLELFQPDRARRGVVTVDSEWGHRLVEQSRIPVTTLSSVAGSEADWRVTVLEETLARTAFALEGPGGRLLETSVPLLGAYNASNAALAIVMLVESGYDLDAIGAALERDGGIDAYIPGRAERLSGDRGPVVFIDYGHTPDAFSSTLAALRRVTAGRIVMVFGADGDRDITKRAEMGAIAARGADAVVITDFHPRWEDPATIRAALLEGARNAVPERDLYEVPDPRTAFRTALSLAGEGDVVLYAGPGHEDYQEAAGERIPYSARDDARLALREAGWL</sequence>
<keyword id="KW-0067">ATP-binding</keyword>
<keyword id="KW-0131">Cell cycle</keyword>
<keyword id="KW-0132">Cell division</keyword>
<keyword id="KW-0133">Cell shape</keyword>
<keyword id="KW-0961">Cell wall biogenesis/degradation</keyword>
<keyword id="KW-0963">Cytoplasm</keyword>
<keyword id="KW-0436">Ligase</keyword>
<keyword id="KW-0547">Nucleotide-binding</keyword>
<keyword id="KW-0573">Peptidoglycan synthesis</keyword>
<keyword id="KW-1185">Reference proteome</keyword>
<proteinExistence type="inferred from homology"/>